<proteinExistence type="evidence at protein level"/>
<organism>
    <name type="scientific">Listeria monocytogenes serovar 1/2a (strain ATCC BAA-679 / EGD-e)</name>
    <dbReference type="NCBI Taxonomy" id="169963"/>
    <lineage>
        <taxon>Bacteria</taxon>
        <taxon>Bacillati</taxon>
        <taxon>Bacillota</taxon>
        <taxon>Bacilli</taxon>
        <taxon>Bacillales</taxon>
        <taxon>Listeriaceae</taxon>
        <taxon>Listeria</taxon>
    </lineage>
</organism>
<accession>Q8Y3L4</accession>
<reference key="1">
    <citation type="journal article" date="2001" name="Science">
        <title>Comparative genomics of Listeria species.</title>
        <authorList>
            <person name="Glaser P."/>
            <person name="Frangeul L."/>
            <person name="Buchrieser C."/>
            <person name="Rusniok C."/>
            <person name="Amend A."/>
            <person name="Baquero F."/>
            <person name="Berche P."/>
            <person name="Bloecker H."/>
            <person name="Brandt P."/>
            <person name="Chakraborty T."/>
            <person name="Charbit A."/>
            <person name="Chetouani F."/>
            <person name="Couve E."/>
            <person name="de Daruvar A."/>
            <person name="Dehoux P."/>
            <person name="Domann E."/>
            <person name="Dominguez-Bernal G."/>
            <person name="Duchaud E."/>
            <person name="Durant L."/>
            <person name="Dussurget O."/>
            <person name="Entian K.-D."/>
            <person name="Fsihi H."/>
            <person name="Garcia-del Portillo F."/>
            <person name="Garrido P."/>
            <person name="Gautier L."/>
            <person name="Goebel W."/>
            <person name="Gomez-Lopez N."/>
            <person name="Hain T."/>
            <person name="Hauf J."/>
            <person name="Jackson D."/>
            <person name="Jones L.-M."/>
            <person name="Kaerst U."/>
            <person name="Kreft J."/>
            <person name="Kuhn M."/>
            <person name="Kunst F."/>
            <person name="Kurapkat G."/>
            <person name="Madueno E."/>
            <person name="Maitournam A."/>
            <person name="Mata Vicente J."/>
            <person name="Ng E."/>
            <person name="Nedjari H."/>
            <person name="Nordsiek G."/>
            <person name="Novella S."/>
            <person name="de Pablos B."/>
            <person name="Perez-Diaz J.-C."/>
            <person name="Purcell R."/>
            <person name="Remmel B."/>
            <person name="Rose M."/>
            <person name="Schlueter T."/>
            <person name="Simoes N."/>
            <person name="Tierrez A."/>
            <person name="Vazquez-Boland J.-A."/>
            <person name="Voss H."/>
            <person name="Wehland J."/>
            <person name="Cossart P."/>
        </authorList>
    </citation>
    <scope>NUCLEOTIDE SEQUENCE [LARGE SCALE GENOMIC DNA]</scope>
    <source>
        <strain>ATCC BAA-679 / EGD-e</strain>
    </source>
</reference>
<reference key="2">
    <citation type="journal article" date="2005" name="Infect. Immun.">
        <title>LPXTG protein InlJ, a newly identified internalin involved in Listeria monocytogenes virulence.</title>
        <authorList>
            <person name="Sabet C."/>
            <person name="Lecuit M."/>
            <person name="Cabanes D."/>
            <person name="Cossart P."/>
            <person name="Bierne H."/>
        </authorList>
    </citation>
    <scope>FUNCTION</scope>
    <scope>INDUCTION</scope>
    <scope>DISRUPTION PHENOTYPE</scope>
    <source>
        <strain>ATCC BAA-679 / EGD-e</strain>
        <strain>CLIP 80459 / Serotype 4b</strain>
    </source>
</reference>
<reference key="3">
    <citation type="journal article" date="2008" name="Arch. Microbiol.">
        <title>Listeria monocytogenes internalins bind to the human intestinal mucin MUC2.</title>
        <authorList>
            <person name="Linden S.K."/>
            <person name="Bierne H."/>
            <person name="Sabet C."/>
            <person name="Png C.W."/>
            <person name="Florin T.H."/>
            <person name="McGuckin M.A."/>
            <person name="Cossart P."/>
        </authorList>
    </citation>
    <scope>INTERACTION WITH HUMAN MUC2</scope>
    <scope>SUBUNIT</scope>
    <scope>DOMAIN</scope>
</reference>
<reference key="4">
    <citation type="journal article" date="2008" name="Infect. Immun.">
        <title>The Listeria monocytogenes virulence factor InlJ is specifically expressed in vivo and behaves as an adhesin.</title>
        <authorList>
            <person name="Sabet C."/>
            <person name="Toledo-Arana A."/>
            <person name="Personnic N."/>
            <person name="Lecuit M."/>
            <person name="Dubrac S."/>
            <person name="Poupel O."/>
            <person name="Gouin E."/>
            <person name="Nahori M.A."/>
            <person name="Cossart P."/>
            <person name="Bierne H."/>
        </authorList>
    </citation>
    <scope>FUNCTION</scope>
    <scope>ACTIVITY REGULATION</scope>
    <scope>SUBCELLULAR LOCATION</scope>
    <scope>INDUCTION</scope>
    <scope>CELL WALL ANCHORING BY SRTA</scope>
    <scope>DISRUPTION PHENOTYPE</scope>
    <source>
        <strain>ATCC BAA-679 / EGD-e</strain>
    </source>
</reference>
<reference key="5">
    <citation type="journal article" date="2011" name="J. Bacteriol.">
        <title>Regulated shift from helical to polar localization of Listeria monocytogenes cell wall-anchored proteins.</title>
        <authorList>
            <person name="Bruck S."/>
            <person name="Personnic N."/>
            <person name="Prevost M.C."/>
            <person name="Cossart P."/>
            <person name="Bierne H."/>
        </authorList>
    </citation>
    <scope>SUBCELLULAR LOCATION</scope>
    <source>
        <strain>ATCC BAA-679 / EGD-e</strain>
    </source>
</reference>
<reference evidence="11" key="6">
    <citation type="journal article" date="2008" name="J. Mol. Biol.">
        <title>Crystal structure and standardized geometric analysis of InlJ, a listerial virulence factor and leucine-rich repeat protein with a novel cysteine ladder.</title>
        <authorList>
            <person name="Bublitz M."/>
            <person name="Holland C."/>
            <person name="Sabet C."/>
            <person name="Reichelt J."/>
            <person name="Cossart P."/>
            <person name="Heinz D.W."/>
            <person name="Bierne H."/>
            <person name="Schubert W.D."/>
        </authorList>
    </citation>
    <scope>X-RAY CRYSTALLOGRAPHY (2.7 ANGSTROMS) OF 52-508</scope>
    <scope>LRR REPEATS</scope>
</reference>
<dbReference type="EMBL" id="AL591984">
    <property type="protein sequence ID" value="CAD01034.1"/>
    <property type="molecule type" value="Genomic_DNA"/>
</dbReference>
<dbReference type="PIR" id="AD1427">
    <property type="entry name" value="AD1427"/>
</dbReference>
<dbReference type="RefSeq" id="NP_466343.1">
    <property type="nucleotide sequence ID" value="NC_003210.1"/>
</dbReference>
<dbReference type="RefSeq" id="WP_010990081.1">
    <property type="nucleotide sequence ID" value="NZ_CP149495.1"/>
</dbReference>
<dbReference type="PDB" id="3BZ5">
    <property type="method" value="X-ray"/>
    <property type="resolution" value="2.70 A"/>
    <property type="chains" value="A=52-508"/>
</dbReference>
<dbReference type="PDBsum" id="3BZ5"/>
<dbReference type="SMR" id="Q8Y3L4"/>
<dbReference type="STRING" id="169963.gene:17595538"/>
<dbReference type="PaxDb" id="169963-lmo2821"/>
<dbReference type="EnsemblBacteria" id="CAD01034">
    <property type="protein sequence ID" value="CAD01034"/>
    <property type="gene ID" value="CAD01034"/>
</dbReference>
<dbReference type="GeneID" id="984504"/>
<dbReference type="KEGG" id="lmo:lmo2821"/>
<dbReference type="PATRIC" id="fig|169963.11.peg.2892"/>
<dbReference type="eggNOG" id="COG4886">
    <property type="taxonomic scope" value="Bacteria"/>
</dbReference>
<dbReference type="eggNOG" id="COG4932">
    <property type="taxonomic scope" value="Bacteria"/>
</dbReference>
<dbReference type="HOGENOM" id="CLU_320241_0_0_9"/>
<dbReference type="OrthoDB" id="2366314at2"/>
<dbReference type="PhylomeDB" id="Q8Y3L4"/>
<dbReference type="BioCyc" id="LMON169963:LMO2821-MONOMER"/>
<dbReference type="EvolutionaryTrace" id="Q8Y3L4"/>
<dbReference type="Proteomes" id="UP000000817">
    <property type="component" value="Chromosome"/>
</dbReference>
<dbReference type="GO" id="GO:0005576">
    <property type="term" value="C:extracellular region"/>
    <property type="evidence" value="ECO:0007669"/>
    <property type="project" value="UniProtKB-KW"/>
</dbReference>
<dbReference type="GO" id="GO:0035591">
    <property type="term" value="F:signaling adaptor activity"/>
    <property type="evidence" value="ECO:0000318"/>
    <property type="project" value="GO_Central"/>
</dbReference>
<dbReference type="GO" id="GO:0007155">
    <property type="term" value="P:cell adhesion"/>
    <property type="evidence" value="ECO:0007669"/>
    <property type="project" value="UniProtKB-KW"/>
</dbReference>
<dbReference type="Gene3D" id="2.60.40.1220">
    <property type="match status" value="1"/>
</dbReference>
<dbReference type="Gene3D" id="3.10.20.320">
    <property type="entry name" value="Putative peptidoglycan bound protein (lpxtg motif)"/>
    <property type="match status" value="4"/>
</dbReference>
<dbReference type="Gene3D" id="3.80.10.10">
    <property type="entry name" value="Ribonuclease Inhibitor"/>
    <property type="match status" value="1"/>
</dbReference>
<dbReference type="InterPro" id="IPR052574">
    <property type="entry name" value="CDIRP"/>
</dbReference>
<dbReference type="InterPro" id="IPR014755">
    <property type="entry name" value="Cu-Rt/internalin_Ig-like"/>
</dbReference>
<dbReference type="InterPro" id="IPR054769">
    <property type="entry name" value="InlJ_EF-hand"/>
</dbReference>
<dbReference type="InterPro" id="IPR054717">
    <property type="entry name" value="InlJ_Ig-like"/>
</dbReference>
<dbReference type="InterPro" id="IPR019931">
    <property type="entry name" value="LPXTG_anchor"/>
</dbReference>
<dbReference type="InterPro" id="IPR032675">
    <property type="entry name" value="LRR_dom_sf"/>
</dbReference>
<dbReference type="InterPro" id="IPR009459">
    <property type="entry name" value="MucBP_dom"/>
</dbReference>
<dbReference type="NCBIfam" id="NF033187">
    <property type="entry name" value="internalin_J"/>
    <property type="match status" value="1"/>
</dbReference>
<dbReference type="NCBIfam" id="TIGR01167">
    <property type="entry name" value="LPXTG_anchor"/>
    <property type="match status" value="1"/>
</dbReference>
<dbReference type="PANTHER" id="PTHR47566">
    <property type="match status" value="1"/>
</dbReference>
<dbReference type="PANTHER" id="PTHR47566:SF1">
    <property type="entry name" value="PROTEIN NUD1"/>
    <property type="match status" value="1"/>
</dbReference>
<dbReference type="Pfam" id="PF22508">
    <property type="entry name" value="InlJ_IG"/>
    <property type="match status" value="1"/>
</dbReference>
<dbReference type="Pfam" id="PF22350">
    <property type="entry name" value="Int_EF-hand"/>
    <property type="match status" value="1"/>
</dbReference>
<dbReference type="Pfam" id="PF06458">
    <property type="entry name" value="MucBP"/>
    <property type="match status" value="4"/>
</dbReference>
<dbReference type="SUPFAM" id="SSF52058">
    <property type="entry name" value="L domain-like"/>
    <property type="match status" value="1"/>
</dbReference>
<dbReference type="PROSITE" id="PS50847">
    <property type="entry name" value="GRAM_POS_ANCHORING"/>
    <property type="match status" value="1"/>
</dbReference>
<gene>
    <name type="primary">inlJ</name>
    <name type="ordered locus">lmo2821</name>
</gene>
<protein>
    <recommendedName>
        <fullName evidence="9">Internalin J</fullName>
    </recommendedName>
</protein>
<evidence type="ECO:0000255" key="1"/>
<evidence type="ECO:0000255" key="2">
    <source>
        <dbReference type="PROSITE-ProRule" id="PRU00477"/>
    </source>
</evidence>
<evidence type="ECO:0000256" key="3">
    <source>
        <dbReference type="SAM" id="MobiDB-lite"/>
    </source>
</evidence>
<evidence type="ECO:0000269" key="4">
    <source>
    </source>
</evidence>
<evidence type="ECO:0000269" key="5">
    <source>
    </source>
</evidence>
<evidence type="ECO:0000269" key="6">
    <source>
    </source>
</evidence>
<evidence type="ECO:0000269" key="7">
    <source>
    </source>
</evidence>
<evidence type="ECO:0000269" key="8">
    <source>
    </source>
</evidence>
<evidence type="ECO:0000303" key="9">
    <source>
    </source>
</evidence>
<evidence type="ECO:0000305" key="10">
    <source>
    </source>
</evidence>
<evidence type="ECO:0007744" key="11">
    <source>
        <dbReference type="PDB" id="3BZ5"/>
    </source>
</evidence>
<evidence type="ECO:0007829" key="12">
    <source>
        <dbReference type="PDB" id="3BZ5"/>
    </source>
</evidence>
<sequence length="851" mass="92803">MKTTKIVIASLVSLTMVSNPLLTFAATNDVIDNTTEITTDKETSSTQPTIKNTLKAGQTQSFNDWFPDDNFASEVAAAFEMQATDTISEEQLATLTSLDCHNSSITDMTGIEKLTGLTKLICTSNNITTLDLSQNTNLTYLACDSNKLTNLDVTPLTKLTYLNCDTNKLTKLDVSQNPLLTYLNCARNTLTEIDVSHNTQLTELDCHLNKKITKLDVTPQTQLTTLDCSFNKITELDVSQNKLLNRLNCDTNNITKLDLNQNIQLTFLDCSSNKLTEIDVTPLTQLTYFDCSVNPLTELDVSTLSKLTTLHCIQTDLLEIDLTHNTQLIYFQAEGCRKIKELDVTHNTQLYLLDCQAAGITELDLSQNPKLVYLYLNNTELTELDVSHNTKLKSLSCVNAHIQDFSSVGKIPALNNNFEAEGQTITMPKETLTNNSLTIAVSPDLLDQFGNPMNIEPGDGGVYDQATNTITWENLSTDNPAVTYTFTSENGAIVGTVTTPFEAPQPIKGEDVTVHYLDDKGEKLADDEVLSGNLDDPYTSSAKDIPDYTLTTTPDNATGTFTTTSQSVTYVYTKNIVAAEPVTVNYVDDTGKTLSPSEILNGNVGDTYNATAKQIDGYTLSAEPTNATGQFTSSAQTVNYIYTKNPAPEKGVVEIHYVDEDNKQLNSTTEISGTIGDNYTTEPKTIEGYTLTTTPGNATGTFTTGSQTVTYVYTKNIEAAEPITVNYVDANGKTLAPSETLNGNVGDTYKATAKQIDGYTLSAEPTNATGQFTSSAQTVNYIYTKNTNTDQPLPTKKPTNTTPTKPSNLKTTEVKKASDTLPKTGDSAPWKSALLGVFLSSTALVIWKKKK</sequence>
<comment type="function">
    <text evidence="4 5">Involved in several steps of L.monocytogenes infection by both intravenous and oral infection (PubMed:16177371). Probably acts as an adhesion; upon ectopic expression in L.innocula bacteria adhere better to human cell lines (PubMed:18227172).</text>
</comment>
<comment type="activity regulation">
    <text evidence="5">Despite being transcribed during bacterial growth in culture the protein is only detected in infected mice.</text>
</comment>
<comment type="subunit">
    <text evidence="6">Nearly full-length mature protein and an internal LRR-containing fragment interact in vitro with human intestinal mucin-2 (MUC2) but not with mucin-1. LRR fragment binding is slightly better at pH 5.5, (the pH of the intestine) than at pH 7.4.</text>
</comment>
<comment type="subcellular location">
    <subcellularLocation>
        <location evidence="2 5 8">Secreted</location>
        <location evidence="2 5 8">Cell wall</location>
        <topology evidence="2">Peptidoglycan-anchor</topology>
    </subcellularLocation>
    <text evidence="5 8">No protein is expressed when grown in liquid culture; protein is detected 72 hours post-inoculation in intravenously infected mice (PubMed:18227172). Upon expression under control of a heterologous promoter during exponential growth is detected on the cell surface as a series of dots in a helical pattern, it is excluded from the septum; at very high expression levels it accumulates at cell poles (PubMed:21725001). The helical pattern of InlA does not overlap with that of InlH, InlJ or Hbp2 (SvpA) (PubMed:21725001). In stationary phase remains outside of the cell pole and septum (PubMed:21725001).</text>
</comment>
<comment type="induction">
    <text evidence="4">Expressed in late exponential phase.</text>
</comment>
<comment type="domain">
    <text evidence="6">The LRR domain (34-508) binds more efficiently in vitro to human intestinal mucin-2 (MUC2) than does a nearly whole protein (26-792) suggesting the MucBP domains do not function in mucin-binding in Listeria.</text>
</comment>
<comment type="disruption phenotype">
    <text evidence="4 5">No visible effect on colonization of host tissue culture cells; decreased organ colonization in mice.</text>
</comment>
<comment type="similarity">
    <text evidence="10">Belongs to the internalin family.</text>
</comment>
<feature type="signal peptide" evidence="1">
    <location>
        <begin position="1"/>
        <end position="25"/>
    </location>
</feature>
<feature type="chain" id="PRO_0000252679" description="Internalin J">
    <location>
        <begin position="26"/>
        <end position="824"/>
    </location>
</feature>
<feature type="propeptide" id="PRO_0000252680" description="Removed by sortase A" evidence="2 5">
    <location>
        <begin position="825"/>
        <end position="851"/>
    </location>
</feature>
<feature type="repeat" description="LRR 1" evidence="7">
    <location>
        <begin position="94"/>
        <end position="115"/>
    </location>
</feature>
<feature type="repeat" description="LRR 2" evidence="7">
    <location>
        <begin position="116"/>
        <end position="136"/>
    </location>
</feature>
<feature type="repeat" description="LRR 3" evidence="7">
    <location>
        <begin position="137"/>
        <end position="157"/>
    </location>
</feature>
<feature type="repeat" description="LRR 4" evidence="7">
    <location>
        <begin position="158"/>
        <end position="179"/>
    </location>
</feature>
<feature type="repeat" description="LRR 5" evidence="7">
    <location>
        <begin position="180"/>
        <end position="200"/>
    </location>
</feature>
<feature type="repeat" description="LRR 6" evidence="7">
    <location>
        <begin position="201"/>
        <end position="221"/>
    </location>
</feature>
<feature type="repeat" description="LRR 7" evidence="7">
    <location>
        <begin position="222"/>
        <end position="243"/>
    </location>
</feature>
<feature type="repeat" description="LRR 8" evidence="7">
    <location>
        <begin position="244"/>
        <end position="263"/>
    </location>
</feature>
<feature type="repeat" description="LRR 9" evidence="7">
    <location>
        <begin position="264"/>
        <end position="284"/>
    </location>
</feature>
<feature type="repeat" description="LRR 10" evidence="7">
    <location>
        <begin position="285"/>
        <end position="306"/>
    </location>
</feature>
<feature type="repeat" description="LRR 11" evidence="7">
    <location>
        <begin position="316"/>
        <end position="325"/>
    </location>
</feature>
<feature type="repeat" description="LRR 12" evidence="7">
    <location>
        <begin position="338"/>
        <end position="357"/>
    </location>
</feature>
<feature type="repeat" description="LRR 13" evidence="7">
    <location>
        <begin position="359"/>
        <end position="368"/>
    </location>
</feature>
<feature type="repeat" description="LRR 14" evidence="7">
    <location>
        <begin position="380"/>
        <end position="402"/>
    </location>
</feature>
<feature type="domain" description="MucBP 1">
    <location>
        <begin position="506"/>
        <end position="568"/>
    </location>
</feature>
<feature type="domain" description="MucBP 2">
    <location>
        <begin position="576"/>
        <end position="638"/>
    </location>
</feature>
<feature type="domain" description="MucBP 3">
    <location>
        <begin position="647"/>
        <end position="709"/>
    </location>
</feature>
<feature type="domain" description="MucBP 4">
    <location>
        <begin position="717"/>
        <end position="779"/>
    </location>
</feature>
<feature type="region of interest" description="Disordered" evidence="3">
    <location>
        <begin position="786"/>
        <end position="825"/>
    </location>
</feature>
<feature type="short sequence motif" description="LPXTG sorting signal" evidence="2">
    <location>
        <begin position="821"/>
        <end position="825"/>
    </location>
</feature>
<feature type="compositionally biased region" description="Low complexity" evidence="3">
    <location>
        <begin position="792"/>
        <end position="811"/>
    </location>
</feature>
<feature type="modified residue" description="Pentaglycyl murein peptidoglycan amidated threonine" evidence="2">
    <location>
        <position position="824"/>
    </location>
</feature>
<feature type="strand" evidence="12">
    <location>
        <begin position="59"/>
        <end position="61"/>
    </location>
</feature>
<feature type="helix" evidence="12">
    <location>
        <begin position="62"/>
        <end position="65"/>
    </location>
</feature>
<feature type="helix" evidence="12">
    <location>
        <begin position="69"/>
        <end position="78"/>
    </location>
</feature>
<feature type="strand" evidence="12">
    <location>
        <begin position="85"/>
        <end position="88"/>
    </location>
</feature>
<feature type="helix" evidence="12">
    <location>
        <begin position="89"/>
        <end position="92"/>
    </location>
</feature>
<feature type="strand" evidence="12">
    <location>
        <begin position="97"/>
        <end position="99"/>
    </location>
</feature>
<feature type="helix" evidence="12">
    <location>
        <begin position="111"/>
        <end position="113"/>
    </location>
</feature>
<feature type="strand" evidence="12">
    <location>
        <begin position="118"/>
        <end position="121"/>
    </location>
</feature>
<feature type="strand" evidence="12">
    <location>
        <begin position="139"/>
        <end position="142"/>
    </location>
</feature>
<feature type="strand" evidence="12">
    <location>
        <begin position="161"/>
        <end position="163"/>
    </location>
</feature>
<feature type="strand" evidence="12">
    <location>
        <begin position="182"/>
        <end position="184"/>
    </location>
</feature>
<feature type="strand" evidence="12">
    <location>
        <begin position="203"/>
        <end position="205"/>
    </location>
</feature>
<feature type="strand" evidence="12">
    <location>
        <begin position="225"/>
        <end position="227"/>
    </location>
</feature>
<feature type="strand" evidence="12">
    <location>
        <begin position="246"/>
        <end position="248"/>
    </location>
</feature>
<feature type="strand" evidence="12">
    <location>
        <begin position="266"/>
        <end position="269"/>
    </location>
</feature>
<feature type="strand" evidence="12">
    <location>
        <begin position="287"/>
        <end position="290"/>
    </location>
</feature>
<feature type="strand" evidence="12">
    <location>
        <begin position="309"/>
        <end position="311"/>
    </location>
</feature>
<feature type="strand" evidence="12">
    <location>
        <begin position="330"/>
        <end position="332"/>
    </location>
</feature>
<feature type="strand" evidence="12">
    <location>
        <begin position="352"/>
        <end position="354"/>
    </location>
</feature>
<feature type="strand" evidence="12">
    <location>
        <begin position="373"/>
        <end position="375"/>
    </location>
</feature>
<feature type="strand" evidence="12">
    <location>
        <begin position="393"/>
        <end position="396"/>
    </location>
</feature>
<feature type="helix" evidence="12">
    <location>
        <begin position="408"/>
        <end position="410"/>
    </location>
</feature>
<feature type="helix" evidence="12">
    <location>
        <begin position="413"/>
        <end position="415"/>
    </location>
</feature>
<feature type="strand" evidence="12">
    <location>
        <begin position="417"/>
        <end position="426"/>
    </location>
</feature>
<feature type="strand" evidence="12">
    <location>
        <begin position="436"/>
        <end position="440"/>
    </location>
</feature>
<feature type="strand" evidence="12">
    <location>
        <begin position="454"/>
        <end position="464"/>
    </location>
</feature>
<feature type="turn" evidence="12">
    <location>
        <begin position="465"/>
        <end position="468"/>
    </location>
</feature>
<feature type="strand" evidence="12">
    <location>
        <begin position="469"/>
        <end position="474"/>
    </location>
</feature>
<feature type="strand" evidence="12">
    <location>
        <begin position="484"/>
        <end position="487"/>
    </location>
</feature>
<feature type="strand" evidence="12">
    <location>
        <begin position="491"/>
        <end position="501"/>
    </location>
</feature>
<keyword id="KW-0002">3D-structure</keyword>
<keyword id="KW-0130">Cell adhesion</keyword>
<keyword id="KW-0134">Cell wall</keyword>
<keyword id="KW-0433">Leucine-rich repeat</keyword>
<keyword id="KW-0572">Peptidoglycan-anchor</keyword>
<keyword id="KW-1185">Reference proteome</keyword>
<keyword id="KW-0677">Repeat</keyword>
<keyword id="KW-0964">Secreted</keyword>
<keyword id="KW-0732">Signal</keyword>
<keyword id="KW-0843">Virulence</keyword>
<name>INLJ_LISMO</name>